<name>RL24_MYCSK</name>
<comment type="function">
    <text evidence="1">One of two assembly initiator proteins, it binds directly to the 5'-end of the 23S rRNA, where it nucleates assembly of the 50S subunit.</text>
</comment>
<comment type="function">
    <text evidence="1">One of the proteins that surrounds the polypeptide exit tunnel on the outside of the subunit.</text>
</comment>
<comment type="subunit">
    <text evidence="1">Part of the 50S ribosomal subunit.</text>
</comment>
<comment type="similarity">
    <text evidence="1">Belongs to the universal ribosomal protein uL24 family.</text>
</comment>
<reference key="1">
    <citation type="submission" date="2006-12" db="EMBL/GenBank/DDBJ databases">
        <title>Complete sequence of chromosome of Mycobacterium sp. KMS.</title>
        <authorList>
            <consortium name="US DOE Joint Genome Institute"/>
            <person name="Copeland A."/>
            <person name="Lucas S."/>
            <person name="Lapidus A."/>
            <person name="Barry K."/>
            <person name="Detter J.C."/>
            <person name="Glavina del Rio T."/>
            <person name="Hammon N."/>
            <person name="Israni S."/>
            <person name="Dalin E."/>
            <person name="Tice H."/>
            <person name="Pitluck S."/>
            <person name="Kiss H."/>
            <person name="Brettin T."/>
            <person name="Bruce D."/>
            <person name="Han C."/>
            <person name="Tapia R."/>
            <person name="Gilna P."/>
            <person name="Schmutz J."/>
            <person name="Larimer F."/>
            <person name="Land M."/>
            <person name="Hauser L."/>
            <person name="Kyrpides N."/>
            <person name="Mikhailova N."/>
            <person name="Miller C.D."/>
            <person name="Richardson P."/>
        </authorList>
    </citation>
    <scope>NUCLEOTIDE SEQUENCE [LARGE SCALE GENOMIC DNA]</scope>
    <source>
        <strain>KMS</strain>
    </source>
</reference>
<dbReference type="EMBL" id="CP000518">
    <property type="protein sequence ID" value="ABL90257.1"/>
    <property type="molecule type" value="Genomic_DNA"/>
</dbReference>
<dbReference type="SMR" id="A1UBP9"/>
<dbReference type="STRING" id="189918.Mkms_1043"/>
<dbReference type="KEGG" id="mkm:Mkms_1043"/>
<dbReference type="HOGENOM" id="CLU_093315_2_0_11"/>
<dbReference type="OrthoDB" id="9807419at2"/>
<dbReference type="GO" id="GO:1990904">
    <property type="term" value="C:ribonucleoprotein complex"/>
    <property type="evidence" value="ECO:0007669"/>
    <property type="project" value="UniProtKB-KW"/>
</dbReference>
<dbReference type="GO" id="GO:0005840">
    <property type="term" value="C:ribosome"/>
    <property type="evidence" value="ECO:0007669"/>
    <property type="project" value="UniProtKB-KW"/>
</dbReference>
<dbReference type="GO" id="GO:0019843">
    <property type="term" value="F:rRNA binding"/>
    <property type="evidence" value="ECO:0007669"/>
    <property type="project" value="UniProtKB-UniRule"/>
</dbReference>
<dbReference type="GO" id="GO:0003735">
    <property type="term" value="F:structural constituent of ribosome"/>
    <property type="evidence" value="ECO:0007669"/>
    <property type="project" value="InterPro"/>
</dbReference>
<dbReference type="GO" id="GO:0006412">
    <property type="term" value="P:translation"/>
    <property type="evidence" value="ECO:0007669"/>
    <property type="project" value="UniProtKB-UniRule"/>
</dbReference>
<dbReference type="CDD" id="cd06089">
    <property type="entry name" value="KOW_RPL26"/>
    <property type="match status" value="1"/>
</dbReference>
<dbReference type="FunFam" id="2.30.30.30:FF:000004">
    <property type="entry name" value="50S ribosomal protein L24"/>
    <property type="match status" value="1"/>
</dbReference>
<dbReference type="Gene3D" id="2.30.30.30">
    <property type="match status" value="1"/>
</dbReference>
<dbReference type="HAMAP" id="MF_01326_B">
    <property type="entry name" value="Ribosomal_uL24_B"/>
    <property type="match status" value="1"/>
</dbReference>
<dbReference type="InterPro" id="IPR005824">
    <property type="entry name" value="KOW"/>
</dbReference>
<dbReference type="InterPro" id="IPR014722">
    <property type="entry name" value="Rib_uL2_dom2"/>
</dbReference>
<dbReference type="InterPro" id="IPR003256">
    <property type="entry name" value="Ribosomal_uL24"/>
</dbReference>
<dbReference type="InterPro" id="IPR005825">
    <property type="entry name" value="Ribosomal_uL24_CS"/>
</dbReference>
<dbReference type="InterPro" id="IPR041988">
    <property type="entry name" value="Ribosomal_uL24_KOW"/>
</dbReference>
<dbReference type="InterPro" id="IPR008991">
    <property type="entry name" value="Translation_prot_SH3-like_sf"/>
</dbReference>
<dbReference type="NCBIfam" id="TIGR01079">
    <property type="entry name" value="rplX_bact"/>
    <property type="match status" value="1"/>
</dbReference>
<dbReference type="PANTHER" id="PTHR12903">
    <property type="entry name" value="MITOCHONDRIAL RIBOSOMAL PROTEIN L24"/>
    <property type="match status" value="1"/>
</dbReference>
<dbReference type="Pfam" id="PF00467">
    <property type="entry name" value="KOW"/>
    <property type="match status" value="1"/>
</dbReference>
<dbReference type="Pfam" id="PF17136">
    <property type="entry name" value="ribosomal_L24"/>
    <property type="match status" value="1"/>
</dbReference>
<dbReference type="SMART" id="SM00739">
    <property type="entry name" value="KOW"/>
    <property type="match status" value="1"/>
</dbReference>
<dbReference type="SUPFAM" id="SSF50104">
    <property type="entry name" value="Translation proteins SH3-like domain"/>
    <property type="match status" value="1"/>
</dbReference>
<dbReference type="PROSITE" id="PS01108">
    <property type="entry name" value="RIBOSOMAL_L24"/>
    <property type="match status" value="1"/>
</dbReference>
<feature type="chain" id="PRO_1000052261" description="Large ribosomal subunit protein uL24">
    <location>
        <begin position="1"/>
        <end position="105"/>
    </location>
</feature>
<gene>
    <name evidence="1" type="primary">rplX</name>
    <name type="ordered locus">Mkms_1043</name>
</gene>
<proteinExistence type="inferred from homology"/>
<sequence>MKVHKGDTVLVVSGKDKGAKGKVIQAYPTRNKVLVEGVNRIKKHTAVSSNERGASSGGIVTQEAPIHVSNVMVVDSDGNPTRIGYRVDEETGKKVRVSKRNGKDI</sequence>
<protein>
    <recommendedName>
        <fullName evidence="1">Large ribosomal subunit protein uL24</fullName>
    </recommendedName>
    <alternativeName>
        <fullName evidence="2">50S ribosomal protein L24</fullName>
    </alternativeName>
</protein>
<keyword id="KW-0687">Ribonucleoprotein</keyword>
<keyword id="KW-0689">Ribosomal protein</keyword>
<keyword id="KW-0694">RNA-binding</keyword>
<keyword id="KW-0699">rRNA-binding</keyword>
<organism>
    <name type="scientific">Mycobacterium sp. (strain KMS)</name>
    <dbReference type="NCBI Taxonomy" id="189918"/>
    <lineage>
        <taxon>Bacteria</taxon>
        <taxon>Bacillati</taxon>
        <taxon>Actinomycetota</taxon>
        <taxon>Actinomycetes</taxon>
        <taxon>Mycobacteriales</taxon>
        <taxon>Mycobacteriaceae</taxon>
        <taxon>Mycobacterium</taxon>
    </lineage>
</organism>
<accession>A1UBP9</accession>
<evidence type="ECO:0000255" key="1">
    <source>
        <dbReference type="HAMAP-Rule" id="MF_01326"/>
    </source>
</evidence>
<evidence type="ECO:0000305" key="2"/>